<accession>Q9J5B1</accession>
<keyword id="KW-0067">ATP-binding</keyword>
<keyword id="KW-1038">Host endoplasmic reticulum</keyword>
<keyword id="KW-0418">Kinase</keyword>
<keyword id="KW-0426">Late protein</keyword>
<keyword id="KW-0547">Nucleotide-binding</keyword>
<keyword id="KW-0597">Phosphoprotein</keyword>
<keyword id="KW-1185">Reference proteome</keyword>
<keyword id="KW-0723">Serine/threonine-protein kinase</keyword>
<keyword id="KW-0808">Transferase</keyword>
<reference key="1">
    <citation type="journal article" date="2000" name="J. Virol.">
        <title>The genome of fowlpox virus.</title>
        <authorList>
            <person name="Afonso C.L."/>
            <person name="Tulman E.R."/>
            <person name="Lu Z."/>
            <person name="Zsak L."/>
            <person name="Kutish G.F."/>
            <person name="Rock D.L."/>
        </authorList>
    </citation>
    <scope>NUCLEOTIDE SEQUENCE [LARGE SCALE GENOMIC DNA]</scope>
</reference>
<feature type="chain" id="PRO_0000086786" description="Serine/threonine-protein kinase 2">
    <location>
        <begin position="1"/>
        <end position="444"/>
    </location>
</feature>
<feature type="domain" description="Protein kinase" evidence="2">
    <location>
        <begin position="87"/>
        <end position="444"/>
    </location>
</feature>
<feature type="active site" description="Proton acceptor" evidence="2 3">
    <location>
        <position position="307"/>
    </location>
</feature>
<feature type="binding site" evidence="2">
    <location>
        <begin position="93"/>
        <end position="101"/>
    </location>
    <ligand>
        <name>ATP</name>
        <dbReference type="ChEBI" id="CHEBI:30616"/>
    </ligand>
</feature>
<feature type="binding site" evidence="2">
    <location>
        <position position="118"/>
    </location>
    <ligand>
        <name>ATP</name>
        <dbReference type="ChEBI" id="CHEBI:30616"/>
    </ligand>
</feature>
<protein>
    <recommendedName>
        <fullName>Serine/threonine-protein kinase 2</fullName>
        <ecNumber evidence="1">2.7.11.1</ecNumber>
    </recommendedName>
    <alternativeName>
        <fullName>Probable serine/threonine-protein kinase FPV111</fullName>
    </alternativeName>
</protein>
<dbReference type="EC" id="2.7.11.1" evidence="1"/>
<dbReference type="EMBL" id="AF198100">
    <property type="protein sequence ID" value="AAF44455.1"/>
    <property type="molecule type" value="Genomic_DNA"/>
</dbReference>
<dbReference type="RefSeq" id="NP_039074.1">
    <property type="nucleotide sequence ID" value="NC_002188.1"/>
</dbReference>
<dbReference type="GeneID" id="1486659"/>
<dbReference type="KEGG" id="vg:1486659"/>
<dbReference type="Proteomes" id="UP000008597">
    <property type="component" value="Segment"/>
</dbReference>
<dbReference type="GO" id="GO:0044165">
    <property type="term" value="C:host cell endoplasmic reticulum"/>
    <property type="evidence" value="ECO:0007669"/>
    <property type="project" value="UniProtKB-SubCell"/>
</dbReference>
<dbReference type="GO" id="GO:0044172">
    <property type="term" value="C:host cell endoplasmic reticulum-Golgi intermediate compartment"/>
    <property type="evidence" value="ECO:0007669"/>
    <property type="project" value="UniProtKB-SubCell"/>
</dbReference>
<dbReference type="GO" id="GO:0005524">
    <property type="term" value="F:ATP binding"/>
    <property type="evidence" value="ECO:0007669"/>
    <property type="project" value="UniProtKB-KW"/>
</dbReference>
<dbReference type="GO" id="GO:0106310">
    <property type="term" value="F:protein serine kinase activity"/>
    <property type="evidence" value="ECO:0007669"/>
    <property type="project" value="RHEA"/>
</dbReference>
<dbReference type="GO" id="GO:0004674">
    <property type="term" value="F:protein serine/threonine kinase activity"/>
    <property type="evidence" value="ECO:0007669"/>
    <property type="project" value="UniProtKB-KW"/>
</dbReference>
<dbReference type="InterPro" id="IPR011009">
    <property type="entry name" value="Kinase-like_dom_sf"/>
</dbReference>
<dbReference type="InterPro" id="IPR008790">
    <property type="entry name" value="Poxvirus_ser/thr_kinase"/>
</dbReference>
<dbReference type="InterPro" id="IPR000719">
    <property type="entry name" value="Prot_kinase_dom"/>
</dbReference>
<dbReference type="InterPro" id="IPR008271">
    <property type="entry name" value="Ser/Thr_kinase_AS"/>
</dbReference>
<dbReference type="Pfam" id="PF05445">
    <property type="entry name" value="Pox_ser-thr_kin"/>
    <property type="match status" value="1"/>
</dbReference>
<dbReference type="PIRSF" id="PIRSF015695">
    <property type="entry name" value="STPK_F10L"/>
    <property type="match status" value="1"/>
</dbReference>
<dbReference type="SUPFAM" id="SSF56112">
    <property type="entry name" value="Protein kinase-like (PK-like)"/>
    <property type="match status" value="1"/>
</dbReference>
<dbReference type="PROSITE" id="PS50011">
    <property type="entry name" value="PROTEIN_KINASE_DOM"/>
    <property type="match status" value="1"/>
</dbReference>
<dbReference type="PROSITE" id="PS00108">
    <property type="entry name" value="PROTEIN_KINASE_ST"/>
    <property type="match status" value="1"/>
</dbReference>
<sequence length="444" mass="52848">MEFPDIHAYNSTKYLEDGDTTILGDTIQFQFIYENIDNKEHISLPKIKIFKYFRDKISFETLDRIIKNDYINPSYFQLKDKKFCAHNRDFYHLSTGGYGIIFRMEKYVVKFVFEDGSKKYKPMEVTSEFTIPRFLYNNLKGDERKFIVCAIAMGINFKIDFLRTIYYNTMSLMSALFNIMEGEPLENKYSHRKVLRYFAKYKQSNDFVKLISQFYPYVVNSNINVINNFNYLINFFERSRRSNGYFNRGNIIIFPLAKCSAEKITPDNYAQYGFSSIVEYTKFMFLQIALLYIKIYELPCSNFVHLDLKPDNILIFDSKEPINIYVGDMHYVFKEPIRCTLNDFDFSQISEIIPNKKAVTAINKEQNWYYDFHFFSHVLFKVYPEISKDEDFTSLLNEFTICDKYICENFRLQVNKLPSISFLINIVSRDIFSKWIDGKSTSHQ</sequence>
<evidence type="ECO:0000250" key="1">
    <source>
        <dbReference type="UniProtKB" id="Q89121"/>
    </source>
</evidence>
<evidence type="ECO:0000255" key="2">
    <source>
        <dbReference type="PROSITE-ProRule" id="PRU00159"/>
    </source>
</evidence>
<evidence type="ECO:0000255" key="3">
    <source>
        <dbReference type="PROSITE-ProRule" id="PRU10027"/>
    </source>
</evidence>
<comment type="function">
    <text evidence="1">Essential serine-protein kinase involved in the early stage of virion morphogenesis.</text>
</comment>
<comment type="catalytic activity">
    <reaction>
        <text>L-seryl-[protein] + ATP = O-phospho-L-seryl-[protein] + ADP + H(+)</text>
        <dbReference type="Rhea" id="RHEA:17989"/>
        <dbReference type="Rhea" id="RHEA-COMP:9863"/>
        <dbReference type="Rhea" id="RHEA-COMP:11604"/>
        <dbReference type="ChEBI" id="CHEBI:15378"/>
        <dbReference type="ChEBI" id="CHEBI:29999"/>
        <dbReference type="ChEBI" id="CHEBI:30616"/>
        <dbReference type="ChEBI" id="CHEBI:83421"/>
        <dbReference type="ChEBI" id="CHEBI:456216"/>
        <dbReference type="EC" id="2.7.11.1"/>
    </reaction>
</comment>
<comment type="catalytic activity">
    <reaction>
        <text>L-threonyl-[protein] + ATP = O-phospho-L-threonyl-[protein] + ADP + H(+)</text>
        <dbReference type="Rhea" id="RHEA:46608"/>
        <dbReference type="Rhea" id="RHEA-COMP:11060"/>
        <dbReference type="Rhea" id="RHEA-COMP:11605"/>
        <dbReference type="ChEBI" id="CHEBI:15378"/>
        <dbReference type="ChEBI" id="CHEBI:30013"/>
        <dbReference type="ChEBI" id="CHEBI:30616"/>
        <dbReference type="ChEBI" id="CHEBI:61977"/>
        <dbReference type="ChEBI" id="CHEBI:456216"/>
        <dbReference type="EC" id="2.7.11.1"/>
    </reaction>
</comment>
<comment type="subcellular location">
    <subcellularLocation>
        <location evidence="1">Host endoplasmic reticulum</location>
    </subcellularLocation>
    <subcellularLocation>
        <location evidence="1">Host endoplasmic reticulum-Golgi intermediate compartment</location>
    </subcellularLocation>
</comment>
<comment type="PTM">
    <text evidence="1">Phosphorylated in vivo. Autophosphorylated in vitro.</text>
</comment>
<comment type="similarity">
    <text evidence="2">Belongs to the protein kinase superfamily. Ser/Thr protein kinase family. Poxviruses subfamily.</text>
</comment>
<name>VPK2_FOWPN</name>
<proteinExistence type="inferred from homology"/>
<gene>
    <name type="primary">OPG054</name>
    <name type="ordered locus">FPV111</name>
</gene>
<organismHost>
    <name type="scientific">Vertebrata</name>
    <dbReference type="NCBI Taxonomy" id="7742"/>
</organismHost>
<organism>
    <name type="scientific">Fowlpox virus (strain NVSL)</name>
    <name type="common">FPV</name>
    <dbReference type="NCBI Taxonomy" id="928301"/>
    <lineage>
        <taxon>Viruses</taxon>
        <taxon>Varidnaviria</taxon>
        <taxon>Bamfordvirae</taxon>
        <taxon>Nucleocytoviricota</taxon>
        <taxon>Pokkesviricetes</taxon>
        <taxon>Chitovirales</taxon>
        <taxon>Poxviridae</taxon>
        <taxon>Chordopoxvirinae</taxon>
        <taxon>Avipoxvirus</taxon>
        <taxon>Fowlpox virus</taxon>
    </lineage>
</organism>